<proteinExistence type="inferred from homology"/>
<organism>
    <name type="scientific">Shewanella woodyi (strain ATCC 51908 / MS32)</name>
    <dbReference type="NCBI Taxonomy" id="392500"/>
    <lineage>
        <taxon>Bacteria</taxon>
        <taxon>Pseudomonadati</taxon>
        <taxon>Pseudomonadota</taxon>
        <taxon>Gammaproteobacteria</taxon>
        <taxon>Alteromonadales</taxon>
        <taxon>Shewanellaceae</taxon>
        <taxon>Shewanella</taxon>
    </lineage>
</organism>
<name>NUOCD_SHEWM</name>
<feature type="chain" id="PRO_0000358694" description="NADH-quinone oxidoreductase subunit C/D">
    <location>
        <begin position="1"/>
        <end position="598"/>
    </location>
</feature>
<feature type="region of interest" description="NADH dehydrogenase I subunit C" evidence="1">
    <location>
        <begin position="1"/>
        <end position="190"/>
    </location>
</feature>
<feature type="region of interest" description="NADH dehydrogenase I subunit D" evidence="1">
    <location>
        <begin position="214"/>
        <end position="598"/>
    </location>
</feature>
<sequence>MSIFTQEVSAINGQSGNIKQMLTLEMLPELKSLLSDSVEQQICIDGILTLWIDKTQLIPALRLLKTLPQPFDLLLDLFGVDERLRLDKDKLPAQDFTLVYQLCSINRNQDIRLKVALANDQAEIPSITAFWPSANWYEREAWDMFGIIFSDHPNLYRLLLPPTFKGHPLRKEFPCRATETEAFSLDDERLAIEQEALKFDPKRWGMEQSNKDNDYLFLNLGPNHPSVHGVFRIALQLDGEHIINSVPDIGYHHRGAEKIAERQTWHGFIPYTDRIDYLGGVMNNFPYILAIEQLANIQVSERVKCIRVMLAECFRILSHMLFFGTFAQDVGQLSPIFYLFIDREKLFGIIEAITGARMHPSWFRIGGLAQDLPKGWDTMMQEFVDEFPKKLDEYEVMVMQNSILKRRSIGIGQYNTQEALDWNITGAGLRATGLEWDLRKARPYSGYENYDFEVPTGHKGDAYDRCQLRVEEMRQSVKIIQQCINNMPEGEVKADHPLTTPPSQRSKHDIETLIQHFLNVSWGPVMPKGESCFAVEATKGVNAYTIISDGSNTSYRTRIRTPSFAHLQMIPKMAKGLMVADLIVILASIDFVMADVDR</sequence>
<protein>
    <recommendedName>
        <fullName evidence="1">NADH-quinone oxidoreductase subunit C/D</fullName>
        <ecNumber evidence="1">7.1.1.-</ecNumber>
    </recommendedName>
    <alternativeName>
        <fullName evidence="1">NADH dehydrogenase I subunit C/D</fullName>
    </alternativeName>
    <alternativeName>
        <fullName evidence="1">NDH-1 subunit C/D</fullName>
    </alternativeName>
</protein>
<dbReference type="EC" id="7.1.1.-" evidence="1"/>
<dbReference type="EMBL" id="CP000961">
    <property type="protein sequence ID" value="ACA87137.1"/>
    <property type="molecule type" value="Genomic_DNA"/>
</dbReference>
<dbReference type="RefSeq" id="WP_012325473.1">
    <property type="nucleotide sequence ID" value="NC_010506.1"/>
</dbReference>
<dbReference type="SMR" id="B1KJV0"/>
<dbReference type="STRING" id="392500.Swoo_2862"/>
<dbReference type="KEGG" id="swd:Swoo_2862"/>
<dbReference type="eggNOG" id="COG0649">
    <property type="taxonomic scope" value="Bacteria"/>
</dbReference>
<dbReference type="HOGENOM" id="CLU_015134_3_2_6"/>
<dbReference type="Proteomes" id="UP000002168">
    <property type="component" value="Chromosome"/>
</dbReference>
<dbReference type="GO" id="GO:0030964">
    <property type="term" value="C:NADH dehydrogenase complex"/>
    <property type="evidence" value="ECO:0007669"/>
    <property type="project" value="InterPro"/>
</dbReference>
<dbReference type="GO" id="GO:0005886">
    <property type="term" value="C:plasma membrane"/>
    <property type="evidence" value="ECO:0007669"/>
    <property type="project" value="UniProtKB-SubCell"/>
</dbReference>
<dbReference type="GO" id="GO:0051287">
    <property type="term" value="F:NAD binding"/>
    <property type="evidence" value="ECO:0007669"/>
    <property type="project" value="InterPro"/>
</dbReference>
<dbReference type="GO" id="GO:0008137">
    <property type="term" value="F:NADH dehydrogenase (ubiquinone) activity"/>
    <property type="evidence" value="ECO:0007669"/>
    <property type="project" value="InterPro"/>
</dbReference>
<dbReference type="GO" id="GO:0050136">
    <property type="term" value="F:NADH:ubiquinone reductase (non-electrogenic) activity"/>
    <property type="evidence" value="ECO:0007669"/>
    <property type="project" value="UniProtKB-UniRule"/>
</dbReference>
<dbReference type="GO" id="GO:0048038">
    <property type="term" value="F:quinone binding"/>
    <property type="evidence" value="ECO:0007669"/>
    <property type="project" value="UniProtKB-KW"/>
</dbReference>
<dbReference type="Gene3D" id="1.10.645.10">
    <property type="entry name" value="Cytochrome-c3 Hydrogenase, chain B"/>
    <property type="match status" value="1"/>
</dbReference>
<dbReference type="Gene3D" id="3.30.460.80">
    <property type="entry name" value="NADH:ubiquinone oxidoreductase, 30kDa subunit"/>
    <property type="match status" value="1"/>
</dbReference>
<dbReference type="HAMAP" id="MF_01357">
    <property type="entry name" value="NDH1_NuoC"/>
    <property type="match status" value="1"/>
</dbReference>
<dbReference type="HAMAP" id="MF_01359">
    <property type="entry name" value="NDH1_NuoCD_1"/>
    <property type="match status" value="1"/>
</dbReference>
<dbReference type="HAMAP" id="MF_01358">
    <property type="entry name" value="NDH1_NuoD"/>
    <property type="match status" value="1"/>
</dbReference>
<dbReference type="InterPro" id="IPR010218">
    <property type="entry name" value="NADH_DH_suC"/>
</dbReference>
<dbReference type="InterPro" id="IPR023062">
    <property type="entry name" value="NADH_DH_suCD"/>
</dbReference>
<dbReference type="InterPro" id="IPR001135">
    <property type="entry name" value="NADH_Q_OxRdtase_suD"/>
</dbReference>
<dbReference type="InterPro" id="IPR037232">
    <property type="entry name" value="NADH_quin_OxRdtase_su_C/D-like"/>
</dbReference>
<dbReference type="InterPro" id="IPR001268">
    <property type="entry name" value="NADH_UbQ_OxRdtase_30kDa_su"/>
</dbReference>
<dbReference type="InterPro" id="IPR014029">
    <property type="entry name" value="NADH_UbQ_OxRdtase_49kDa_CS"/>
</dbReference>
<dbReference type="InterPro" id="IPR022885">
    <property type="entry name" value="NDH1_su_D/H"/>
</dbReference>
<dbReference type="InterPro" id="IPR029014">
    <property type="entry name" value="NiFe-Hase_large"/>
</dbReference>
<dbReference type="NCBIfam" id="TIGR01961">
    <property type="entry name" value="NuoC_fam"/>
    <property type="match status" value="1"/>
</dbReference>
<dbReference type="NCBIfam" id="TIGR01962">
    <property type="entry name" value="NuoD"/>
    <property type="match status" value="1"/>
</dbReference>
<dbReference type="NCBIfam" id="NF004739">
    <property type="entry name" value="PRK06075.1"/>
    <property type="match status" value="1"/>
</dbReference>
<dbReference type="NCBIfam" id="NF008728">
    <property type="entry name" value="PRK11742.1"/>
    <property type="match status" value="1"/>
</dbReference>
<dbReference type="PANTHER" id="PTHR11993:SF45">
    <property type="entry name" value="NADH-QUINONE OXIDOREDUCTASE SUBUNIT C_D"/>
    <property type="match status" value="1"/>
</dbReference>
<dbReference type="PANTHER" id="PTHR11993">
    <property type="entry name" value="NADH-UBIQUINONE OXIDOREDUCTASE 49 KDA SUBUNIT"/>
    <property type="match status" value="1"/>
</dbReference>
<dbReference type="Pfam" id="PF00329">
    <property type="entry name" value="Complex1_30kDa"/>
    <property type="match status" value="1"/>
</dbReference>
<dbReference type="Pfam" id="PF00346">
    <property type="entry name" value="Complex1_49kDa"/>
    <property type="match status" value="1"/>
</dbReference>
<dbReference type="SUPFAM" id="SSF56762">
    <property type="entry name" value="HydB/Nqo4-like"/>
    <property type="match status" value="1"/>
</dbReference>
<dbReference type="SUPFAM" id="SSF143243">
    <property type="entry name" value="Nqo5-like"/>
    <property type="match status" value="1"/>
</dbReference>
<dbReference type="PROSITE" id="PS00535">
    <property type="entry name" value="COMPLEX1_49K"/>
    <property type="match status" value="1"/>
</dbReference>
<evidence type="ECO:0000255" key="1">
    <source>
        <dbReference type="HAMAP-Rule" id="MF_01359"/>
    </source>
</evidence>
<reference key="1">
    <citation type="submission" date="2008-02" db="EMBL/GenBank/DDBJ databases">
        <title>Complete sequence of Shewanella woodyi ATCC 51908.</title>
        <authorList>
            <consortium name="US DOE Joint Genome Institute"/>
            <person name="Copeland A."/>
            <person name="Lucas S."/>
            <person name="Lapidus A."/>
            <person name="Glavina del Rio T."/>
            <person name="Dalin E."/>
            <person name="Tice H."/>
            <person name="Bruce D."/>
            <person name="Goodwin L."/>
            <person name="Pitluck S."/>
            <person name="Sims D."/>
            <person name="Brettin T."/>
            <person name="Detter J.C."/>
            <person name="Han C."/>
            <person name="Kuske C.R."/>
            <person name="Schmutz J."/>
            <person name="Larimer F."/>
            <person name="Land M."/>
            <person name="Hauser L."/>
            <person name="Kyrpides N."/>
            <person name="Lykidis A."/>
            <person name="Zhao J.-S."/>
            <person name="Richardson P."/>
        </authorList>
    </citation>
    <scope>NUCLEOTIDE SEQUENCE [LARGE SCALE GENOMIC DNA]</scope>
    <source>
        <strain>ATCC 51908 / MS32</strain>
    </source>
</reference>
<accession>B1KJV0</accession>
<comment type="function">
    <text evidence="1">NDH-1 shuttles electrons from NADH, via FMN and iron-sulfur (Fe-S) centers, to quinones in the respiratory chain. The immediate electron acceptor for the enzyme in this species is believed to be ubiquinone. Couples the redox reaction to proton translocation (for every two electrons transferred, four hydrogen ions are translocated across the cytoplasmic membrane), and thus conserves the redox energy in a proton gradient.</text>
</comment>
<comment type="catalytic activity">
    <reaction evidence="1">
        <text>a quinone + NADH + 5 H(+)(in) = a quinol + NAD(+) + 4 H(+)(out)</text>
        <dbReference type="Rhea" id="RHEA:57888"/>
        <dbReference type="ChEBI" id="CHEBI:15378"/>
        <dbReference type="ChEBI" id="CHEBI:24646"/>
        <dbReference type="ChEBI" id="CHEBI:57540"/>
        <dbReference type="ChEBI" id="CHEBI:57945"/>
        <dbReference type="ChEBI" id="CHEBI:132124"/>
    </reaction>
</comment>
<comment type="subunit">
    <text evidence="1">NDH-1 is composed of 13 different subunits. Subunits NuoB, CD, E, F, and G constitute the peripheral sector of the complex.</text>
</comment>
<comment type="subcellular location">
    <subcellularLocation>
        <location evidence="1">Cell inner membrane</location>
        <topology evidence="1">Peripheral membrane protein</topology>
        <orientation evidence="1">Cytoplasmic side</orientation>
    </subcellularLocation>
</comment>
<comment type="similarity">
    <text evidence="1">In the N-terminal section; belongs to the complex I 30 kDa subunit family.</text>
</comment>
<comment type="similarity">
    <text evidence="1">In the C-terminal section; belongs to the complex I 49 kDa subunit family.</text>
</comment>
<keyword id="KW-0997">Cell inner membrane</keyword>
<keyword id="KW-1003">Cell membrane</keyword>
<keyword id="KW-0472">Membrane</keyword>
<keyword id="KW-0511">Multifunctional enzyme</keyword>
<keyword id="KW-0520">NAD</keyword>
<keyword id="KW-0874">Quinone</keyword>
<keyword id="KW-1185">Reference proteome</keyword>
<keyword id="KW-1278">Translocase</keyword>
<keyword id="KW-0813">Transport</keyword>
<keyword id="KW-0830">Ubiquinone</keyword>
<gene>
    <name evidence="1" type="primary">nuoC</name>
    <name evidence="1" type="synonym">nuoCD</name>
    <name evidence="1" type="synonym">nuoD</name>
    <name type="ordered locus">Swoo_2862</name>
</gene>